<sequence>MVIKAQSPAGFAEEYLIESIWNNRFPPGSILPAERELSELIGVTRTTLREVLQRLARDGWLTIRHGKPTQVNNFWETSGLNILETLARLDHDSVPQLIDNVLAVRTNIAAIFIRAAVRQHPDRVQAIVADAPTVEDSADAFADLDYRIFRALAFACGNPIYGLILNGLKGLYTRVGRYYFSNPQARRLALAFYSRLGELAASRQYDRVMDFVRSYGKESGAIWHGMQSGIPRDLADGHA</sequence>
<accession>C5B9W3</accession>
<name>FADR_EDWI9</name>
<organism>
    <name type="scientific">Edwardsiella ictaluri (strain 93-146)</name>
    <dbReference type="NCBI Taxonomy" id="634503"/>
    <lineage>
        <taxon>Bacteria</taxon>
        <taxon>Pseudomonadati</taxon>
        <taxon>Pseudomonadota</taxon>
        <taxon>Gammaproteobacteria</taxon>
        <taxon>Enterobacterales</taxon>
        <taxon>Hafniaceae</taxon>
        <taxon>Edwardsiella</taxon>
    </lineage>
</organism>
<dbReference type="EMBL" id="CP001600">
    <property type="protein sequence ID" value="ACR68814.1"/>
    <property type="molecule type" value="Genomic_DNA"/>
</dbReference>
<dbReference type="RefSeq" id="WP_015870970.1">
    <property type="nucleotide sequence ID" value="NZ_CP169062.1"/>
</dbReference>
<dbReference type="SMR" id="C5B9W3"/>
<dbReference type="STRING" id="67780.B6E78_01340"/>
<dbReference type="GeneID" id="69538607"/>
<dbReference type="KEGG" id="eic:NT01EI_1630"/>
<dbReference type="PATRIC" id="fig|634503.3.peg.1461"/>
<dbReference type="HOGENOM" id="CLU_017584_9_4_6"/>
<dbReference type="OrthoDB" id="5683977at2"/>
<dbReference type="Proteomes" id="UP000001485">
    <property type="component" value="Chromosome"/>
</dbReference>
<dbReference type="GO" id="GO:0005737">
    <property type="term" value="C:cytoplasm"/>
    <property type="evidence" value="ECO:0007669"/>
    <property type="project" value="UniProtKB-SubCell"/>
</dbReference>
<dbReference type="GO" id="GO:0003677">
    <property type="term" value="F:DNA binding"/>
    <property type="evidence" value="ECO:0007669"/>
    <property type="project" value="UniProtKB-KW"/>
</dbReference>
<dbReference type="GO" id="GO:0003700">
    <property type="term" value="F:DNA-binding transcription factor activity"/>
    <property type="evidence" value="ECO:0007669"/>
    <property type="project" value="UniProtKB-UniRule"/>
</dbReference>
<dbReference type="GO" id="GO:0000062">
    <property type="term" value="F:fatty-acyl-CoA binding"/>
    <property type="evidence" value="ECO:0007669"/>
    <property type="project" value="InterPro"/>
</dbReference>
<dbReference type="GO" id="GO:0006631">
    <property type="term" value="P:fatty acid metabolic process"/>
    <property type="evidence" value="ECO:0007669"/>
    <property type="project" value="UniProtKB-KW"/>
</dbReference>
<dbReference type="GO" id="GO:0019217">
    <property type="term" value="P:regulation of fatty acid metabolic process"/>
    <property type="evidence" value="ECO:0007669"/>
    <property type="project" value="UniProtKB-UniRule"/>
</dbReference>
<dbReference type="CDD" id="cd07377">
    <property type="entry name" value="WHTH_GntR"/>
    <property type="match status" value="1"/>
</dbReference>
<dbReference type="FunFam" id="1.10.10.10:FF:000036">
    <property type="entry name" value="Fatty acid metabolism regulator protein"/>
    <property type="match status" value="1"/>
</dbReference>
<dbReference type="Gene3D" id="1.20.120.530">
    <property type="entry name" value="GntR ligand-binding domain-like"/>
    <property type="match status" value="1"/>
</dbReference>
<dbReference type="Gene3D" id="1.10.10.10">
    <property type="entry name" value="Winged helix-like DNA-binding domain superfamily/Winged helix DNA-binding domain"/>
    <property type="match status" value="1"/>
</dbReference>
<dbReference type="HAMAP" id="MF_00696">
    <property type="entry name" value="HTH_FadR"/>
    <property type="match status" value="1"/>
</dbReference>
<dbReference type="InterPro" id="IPR014178">
    <property type="entry name" value="FA-response_TF_FadR"/>
</dbReference>
<dbReference type="InterPro" id="IPR028374">
    <property type="entry name" value="FadR_C"/>
</dbReference>
<dbReference type="InterPro" id="IPR008920">
    <property type="entry name" value="TF_FadR/GntR_C"/>
</dbReference>
<dbReference type="InterPro" id="IPR000524">
    <property type="entry name" value="Tscrpt_reg_HTH_GntR"/>
</dbReference>
<dbReference type="InterPro" id="IPR036388">
    <property type="entry name" value="WH-like_DNA-bd_sf"/>
</dbReference>
<dbReference type="InterPro" id="IPR036390">
    <property type="entry name" value="WH_DNA-bd_sf"/>
</dbReference>
<dbReference type="NCBIfam" id="TIGR02812">
    <property type="entry name" value="fadR_gamma"/>
    <property type="match status" value="1"/>
</dbReference>
<dbReference type="NCBIfam" id="NF003444">
    <property type="entry name" value="PRK04984.1"/>
    <property type="match status" value="1"/>
</dbReference>
<dbReference type="PANTHER" id="PTHR43537:SF52">
    <property type="entry name" value="FATTY ACID METABOLISM REGULATOR PROTEIN"/>
    <property type="match status" value="1"/>
</dbReference>
<dbReference type="PANTHER" id="PTHR43537">
    <property type="entry name" value="TRANSCRIPTIONAL REGULATOR, GNTR FAMILY"/>
    <property type="match status" value="1"/>
</dbReference>
<dbReference type="Pfam" id="PF07840">
    <property type="entry name" value="FadR_C"/>
    <property type="match status" value="1"/>
</dbReference>
<dbReference type="Pfam" id="PF00392">
    <property type="entry name" value="GntR"/>
    <property type="match status" value="1"/>
</dbReference>
<dbReference type="PRINTS" id="PR00035">
    <property type="entry name" value="HTHGNTR"/>
</dbReference>
<dbReference type="SMART" id="SM00345">
    <property type="entry name" value="HTH_GNTR"/>
    <property type="match status" value="1"/>
</dbReference>
<dbReference type="SUPFAM" id="SSF48008">
    <property type="entry name" value="GntR ligand-binding domain-like"/>
    <property type="match status" value="1"/>
</dbReference>
<dbReference type="SUPFAM" id="SSF46785">
    <property type="entry name" value="Winged helix' DNA-binding domain"/>
    <property type="match status" value="1"/>
</dbReference>
<dbReference type="PROSITE" id="PS50949">
    <property type="entry name" value="HTH_GNTR"/>
    <property type="match status" value="1"/>
</dbReference>
<keyword id="KW-0010">Activator</keyword>
<keyword id="KW-0963">Cytoplasm</keyword>
<keyword id="KW-0238">DNA-binding</keyword>
<keyword id="KW-0276">Fatty acid metabolism</keyword>
<keyword id="KW-0443">Lipid metabolism</keyword>
<keyword id="KW-0678">Repressor</keyword>
<keyword id="KW-0804">Transcription</keyword>
<keyword id="KW-0805">Transcription regulation</keyword>
<proteinExistence type="inferred from homology"/>
<reference key="1">
    <citation type="submission" date="2009-03" db="EMBL/GenBank/DDBJ databases">
        <title>Complete genome sequence of Edwardsiella ictaluri 93-146.</title>
        <authorList>
            <person name="Williams M.L."/>
            <person name="Gillaspy A.F."/>
            <person name="Dyer D.W."/>
            <person name="Thune R.L."/>
            <person name="Waldbieser G.C."/>
            <person name="Schuster S.C."/>
            <person name="Gipson J."/>
            <person name="Zaitshik J."/>
            <person name="Landry C."/>
            <person name="Lawrence M.L."/>
        </authorList>
    </citation>
    <scope>NUCLEOTIDE SEQUENCE [LARGE SCALE GENOMIC DNA]</scope>
    <source>
        <strain>93-146</strain>
    </source>
</reference>
<comment type="function">
    <text evidence="1">Multifunctional regulator of fatty acid metabolism.</text>
</comment>
<comment type="subunit">
    <text evidence="1">Homodimer.</text>
</comment>
<comment type="subcellular location">
    <subcellularLocation>
        <location evidence="1">Cytoplasm</location>
    </subcellularLocation>
</comment>
<feature type="chain" id="PRO_1000212633" description="Fatty acid metabolism regulator protein">
    <location>
        <begin position="1"/>
        <end position="239"/>
    </location>
</feature>
<feature type="domain" description="HTH gntR-type" evidence="1">
    <location>
        <begin position="6"/>
        <end position="74"/>
    </location>
</feature>
<feature type="DNA-binding region" description="H-T-H motif" evidence="1">
    <location>
        <begin position="34"/>
        <end position="53"/>
    </location>
</feature>
<protein>
    <recommendedName>
        <fullName evidence="1">Fatty acid metabolism regulator protein</fullName>
    </recommendedName>
</protein>
<evidence type="ECO:0000255" key="1">
    <source>
        <dbReference type="HAMAP-Rule" id="MF_00696"/>
    </source>
</evidence>
<gene>
    <name evidence="1" type="primary">fadR</name>
    <name type="ordered locus">NT01EI_1630</name>
</gene>